<feature type="chain" id="PRO_0000256199" description="Histone transcription regulator 3 homolog">
    <location>
        <begin position="1"/>
        <end position="1776"/>
    </location>
</feature>
<feature type="region of interest" description="Disordered" evidence="2">
    <location>
        <begin position="180"/>
        <end position="218"/>
    </location>
</feature>
<feature type="region of interest" description="Disordered" evidence="2">
    <location>
        <begin position="241"/>
        <end position="260"/>
    </location>
</feature>
<feature type="region of interest" description="Disordered" evidence="2">
    <location>
        <begin position="1709"/>
        <end position="1776"/>
    </location>
</feature>
<feature type="compositionally biased region" description="Basic and acidic residues" evidence="2">
    <location>
        <begin position="190"/>
        <end position="206"/>
    </location>
</feature>
<feature type="compositionally biased region" description="Basic and acidic residues" evidence="2">
    <location>
        <begin position="1716"/>
        <end position="1742"/>
    </location>
</feature>
<feature type="compositionally biased region" description="Basic and acidic residues" evidence="2">
    <location>
        <begin position="1766"/>
        <end position="1776"/>
    </location>
</feature>
<keyword id="KW-0159">Chromosome partition</keyword>
<keyword id="KW-0539">Nucleus</keyword>
<keyword id="KW-1185">Reference proteome</keyword>
<keyword id="KW-0804">Transcription</keyword>
<keyword id="KW-0805">Transcription regulation</keyword>
<protein>
    <recommendedName>
        <fullName>Histone transcription regulator 3 homolog</fullName>
    </recommendedName>
</protein>
<gene>
    <name type="primary">HIR3</name>
    <name type="ordered locus">DEHA2F05258g</name>
</gene>
<organism>
    <name type="scientific">Debaryomyces hansenii (strain ATCC 36239 / CBS 767 / BCRC 21394 / JCM 1990 / NBRC 0083 / IGC 2968)</name>
    <name type="common">Yeast</name>
    <name type="synonym">Torulaspora hansenii</name>
    <dbReference type="NCBI Taxonomy" id="284592"/>
    <lineage>
        <taxon>Eukaryota</taxon>
        <taxon>Fungi</taxon>
        <taxon>Dikarya</taxon>
        <taxon>Ascomycota</taxon>
        <taxon>Saccharomycotina</taxon>
        <taxon>Pichiomycetes</taxon>
        <taxon>Debaryomycetaceae</taxon>
        <taxon>Debaryomyces</taxon>
    </lineage>
</organism>
<name>HIR3_DEBHA</name>
<dbReference type="EMBL" id="CR382138">
    <property type="protein sequence ID" value="CAR66279.1"/>
    <property type="molecule type" value="Genomic_DNA"/>
</dbReference>
<dbReference type="RefSeq" id="XP_002770749.1">
    <property type="nucleotide sequence ID" value="XM_002770703.1"/>
</dbReference>
<dbReference type="SMR" id="Q6BMI2"/>
<dbReference type="FunCoup" id="Q6BMI2">
    <property type="interactions" value="165"/>
</dbReference>
<dbReference type="STRING" id="284592.Q6BMI2"/>
<dbReference type="GeneID" id="8998886"/>
<dbReference type="KEGG" id="dha:DEHA2F05258g"/>
<dbReference type="VEuPathDB" id="FungiDB:DEHA2F05258g"/>
<dbReference type="eggNOG" id="ENOG502QQX4">
    <property type="taxonomic scope" value="Eukaryota"/>
</dbReference>
<dbReference type="HOGENOM" id="CLU_001316_0_0_1"/>
<dbReference type="InParanoid" id="Q6BMI2"/>
<dbReference type="OMA" id="YMFSLHE"/>
<dbReference type="OrthoDB" id="77564at2759"/>
<dbReference type="Proteomes" id="UP000000599">
    <property type="component" value="Chromosome F"/>
</dbReference>
<dbReference type="GO" id="GO:0000417">
    <property type="term" value="C:HIR complex"/>
    <property type="evidence" value="ECO:0007669"/>
    <property type="project" value="TreeGrafter"/>
</dbReference>
<dbReference type="GO" id="GO:0005634">
    <property type="term" value="C:nucleus"/>
    <property type="evidence" value="ECO:0007669"/>
    <property type="project" value="UniProtKB-SubCell"/>
</dbReference>
<dbReference type="GO" id="GO:0031491">
    <property type="term" value="F:nucleosome binding"/>
    <property type="evidence" value="ECO:0007669"/>
    <property type="project" value="TreeGrafter"/>
</dbReference>
<dbReference type="GO" id="GO:0006325">
    <property type="term" value="P:chromatin organization"/>
    <property type="evidence" value="ECO:0007669"/>
    <property type="project" value="InterPro"/>
</dbReference>
<dbReference type="GO" id="GO:0007059">
    <property type="term" value="P:chromosome segregation"/>
    <property type="evidence" value="ECO:0007669"/>
    <property type="project" value="UniProtKB-KW"/>
</dbReference>
<dbReference type="InterPro" id="IPR033053">
    <property type="entry name" value="Hir3/CABIN1"/>
</dbReference>
<dbReference type="PANTHER" id="PTHR15502">
    <property type="entry name" value="CALCINEURIN-BINDING PROTEIN CABIN 1-RELATED"/>
    <property type="match status" value="1"/>
</dbReference>
<dbReference type="PANTHER" id="PTHR15502:SF7">
    <property type="entry name" value="CALCINEURIN-BINDING PROTEIN CABIN-1"/>
    <property type="match status" value="1"/>
</dbReference>
<evidence type="ECO:0000250" key="1"/>
<evidence type="ECO:0000256" key="2">
    <source>
        <dbReference type="SAM" id="MobiDB-lite"/>
    </source>
</evidence>
<evidence type="ECO:0000305" key="3"/>
<comment type="function">
    <text evidence="1">Has a role in a nucleosome assembly pathway that is required for the integrity of heterochromatin and proper chromosome segregation.</text>
</comment>
<comment type="subcellular location">
    <subcellularLocation>
        <location evidence="1">Nucleus</location>
    </subcellularLocation>
</comment>
<comment type="similarity">
    <text evidence="3">Belongs to the HIR3 family.</text>
</comment>
<accession>Q6BMI2</accession>
<accession>B5RUA1</accession>
<sequence length="1776" mass="205042">MIDDMIISLIYQEADEKLLNTLYEIFTYLNSAKLARFTLEYLISGKDESDDLFGLIPVEDLCKQKYKLLLQRLHISKPSSSDGDGTRELELIKEKLAFLEPIKADYNTSIENTTNLKTVNINIEYAQRDLNWTSVIDDINKKVKHLQDKEKSQELSRLRIKDLDPYLLTENPIERVRFTIPVPEDESTHDDDVEKNDSKEVDKENNEVPDGEILIDEGSNHINSDEEIFLEAREFLEKEINDGKETQDSKNPSEKDVEGSTCKLDHIPANREVIEGEKHISEENAISKSAPMIQRSSKRVRYRNEESSMEINDVEITRSCFVETERFFENLNSYLDLFNKEAATNLTLTNIVNIYVPEKNNNDENSAEGYVNDFLFILNDWNTRKYTHSLFVDDDTPAGSTASKSTEDEKIKLMEVLSTFGKKGDSLNSDLSKDIKDISSYETTEEIQKFLHDINENPCHYEELKLLILRKLLSIQRPKGDFKGHAAYCLITDTIWNSKLYDRIREWTIQCESIILNHLRLEGCDALGISHMLDDFSFSVAIYEILVDTYISIKDQINSMTSLNYKRTTHKPNKATLNNISLELVKIGDKLNRWTQHFEDLLERIDLSFAMMDQDFFTYYCRYKWSFIHKEKSQNTIWQEKGFIMSQLHELHDNISTKKEAEAHIPLPNYENINEISVDSIKTQVTTTSILSILAKILYAKPGTNNDEAIHLLETILISDSSPDESIEALPLNKEVSTFDKDALIAIKDFLEESPVDMKLSSWNILFSYYDENNQFAKFQHGFEQNVSFILYYLNSNTYNGLIGTKFETLAKVLGSYGKHVRIFLSHLRENNWKLSRDSHRTSSSIERTFSELLKLFELFYLFSIHEEAALISSSKLSVKARSNKAYERFKDIFISTVSVIVIYYKELLMNTVKIEESKVPSEIEKTIGNLICDFHEQLGWRRVCDAAEGLFLNLAQDILVAFDNNLFEKQLAQLISCRYHYSVSIDTFTPANHETKKTAEFDLSSTQRMADFILPLCFKKNPLKATPKSDMKLLIDEFYEVVGDPDFDSCEILSRNDSLFEHFLESTSITSRFLRDTFYGLEELDFRNPPDNANIIRSGLYYMQGLLMFASYKIRKKSTQSRAVELENIIMLLKNDLVYCTNRMESWFLLGQAYGFLVEDDLIWTSDKLTVPERKIGTANLQRKSLICYLMAINESTKANIKKDLPLKTTIGSLMALFSKEMYNAAMKPMDMHAFKVQNIPRFIKKPTGAAFVSVSTSSVNSNLCLKVIQQSLHIAIKSKRNDWTYYYYLSKVQRKLNKSPRIVLDTLQQASNIAKEQSNPSDPIIEPHYKKCSLIYKYAKEGSLSFQSGLEFLKNDMVINYEKGNKSIEKPMDFYEIIVECLKAVISYDKKRWHHKPRYRLAKVLFEEFGKITEAKEEISSIVSLKSTNKTLVSIWKPENERPGKHFYYTFQYAHFYVVLLSSDRNLIGLIQMLPKLRRSNSIMVSLYSLWETLCSSICKIIRNSLKVDEGFTERFMSSSGYQKFMMNSKSLLENMKGDGVPGELQIHLCFLHAITDMKKLNNGFGPTSLIDDTMVAIFIRIYLYFEKQSNNLKPMGTPEPTESPNEKAKKLAKRDFFPLISDMLKTFRRDIENILKDQPDIYNDFVSCSDKKVEKEGVVGKENNVNSKILEEEQSREVIKTPELKMDSINFESVSDKHITQNKLEADTILQENNDKSPKNNGIKDNENSIPDSRARTLDEMLFNKGLEKKVQGESPTAKKQKLNSDHHDSASE</sequence>
<reference key="1">
    <citation type="journal article" date="2004" name="Nature">
        <title>Genome evolution in yeasts.</title>
        <authorList>
            <person name="Dujon B."/>
            <person name="Sherman D."/>
            <person name="Fischer G."/>
            <person name="Durrens P."/>
            <person name="Casaregola S."/>
            <person name="Lafontaine I."/>
            <person name="de Montigny J."/>
            <person name="Marck C."/>
            <person name="Neuveglise C."/>
            <person name="Talla E."/>
            <person name="Goffard N."/>
            <person name="Frangeul L."/>
            <person name="Aigle M."/>
            <person name="Anthouard V."/>
            <person name="Babour A."/>
            <person name="Barbe V."/>
            <person name="Barnay S."/>
            <person name="Blanchin S."/>
            <person name="Beckerich J.-M."/>
            <person name="Beyne E."/>
            <person name="Bleykasten C."/>
            <person name="Boisrame A."/>
            <person name="Boyer J."/>
            <person name="Cattolico L."/>
            <person name="Confanioleri F."/>
            <person name="de Daruvar A."/>
            <person name="Despons L."/>
            <person name="Fabre E."/>
            <person name="Fairhead C."/>
            <person name="Ferry-Dumazet H."/>
            <person name="Groppi A."/>
            <person name="Hantraye F."/>
            <person name="Hennequin C."/>
            <person name="Jauniaux N."/>
            <person name="Joyet P."/>
            <person name="Kachouri R."/>
            <person name="Kerrest A."/>
            <person name="Koszul R."/>
            <person name="Lemaire M."/>
            <person name="Lesur I."/>
            <person name="Ma L."/>
            <person name="Muller H."/>
            <person name="Nicaud J.-M."/>
            <person name="Nikolski M."/>
            <person name="Oztas S."/>
            <person name="Ozier-Kalogeropoulos O."/>
            <person name="Pellenz S."/>
            <person name="Potier S."/>
            <person name="Richard G.-F."/>
            <person name="Straub M.-L."/>
            <person name="Suleau A."/>
            <person name="Swennen D."/>
            <person name="Tekaia F."/>
            <person name="Wesolowski-Louvel M."/>
            <person name="Westhof E."/>
            <person name="Wirth B."/>
            <person name="Zeniou-Meyer M."/>
            <person name="Zivanovic Y."/>
            <person name="Bolotin-Fukuhara M."/>
            <person name="Thierry A."/>
            <person name="Bouchier C."/>
            <person name="Caudron B."/>
            <person name="Scarpelli C."/>
            <person name="Gaillardin C."/>
            <person name="Weissenbach J."/>
            <person name="Wincker P."/>
            <person name="Souciet J.-L."/>
        </authorList>
    </citation>
    <scope>NUCLEOTIDE SEQUENCE [LARGE SCALE GENOMIC DNA]</scope>
    <source>
        <strain>ATCC 36239 / CBS 767 / BCRC 21394 / JCM 1990 / NBRC 0083 / IGC 2968</strain>
    </source>
</reference>
<proteinExistence type="inferred from homology"/>